<proteinExistence type="evidence at protein level"/>
<accession>A0A075B6J1</accession>
<evidence type="ECO:0000250" key="1">
    <source>
        <dbReference type="UniProtKB" id="P01721"/>
    </source>
</evidence>
<evidence type="ECO:0000255" key="2"/>
<evidence type="ECO:0000255" key="3">
    <source>
        <dbReference type="PROSITE-ProRule" id="PRU00114"/>
    </source>
</evidence>
<evidence type="ECO:0000303" key="4">
    <source>
    </source>
</evidence>
<evidence type="ECO:0000303" key="5">
    <source>
    </source>
</evidence>
<evidence type="ECO:0000303" key="6">
    <source>
    </source>
</evidence>
<evidence type="ECO:0000303" key="7">
    <source>
    </source>
</evidence>
<evidence type="ECO:0000303" key="8">
    <source>
    </source>
</evidence>
<evidence type="ECO:0000303" key="9">
    <source ref="3"/>
</evidence>
<evidence type="ECO:0000305" key="10"/>
<keyword id="KW-1064">Adaptive immunity</keyword>
<keyword id="KW-1003">Cell membrane</keyword>
<keyword id="KW-1015">Disulfide bond</keyword>
<keyword id="KW-0391">Immunity</keyword>
<keyword id="KW-1280">Immunoglobulin</keyword>
<keyword id="KW-0393">Immunoglobulin domain</keyword>
<keyword id="KW-0472">Membrane</keyword>
<keyword id="KW-1267">Proteomics identification</keyword>
<keyword id="KW-1185">Reference proteome</keyword>
<keyword id="KW-0964">Secreted</keyword>
<keyword id="KW-0732">Signal</keyword>
<comment type="function">
    <text evidence="5 6 7 8">V region of the variable domain of immunoglobulin light chains that participates in the antigen recognition (PubMed:24600447). Immunoglobulins, also known as antibodies, are membrane-bound or secreted glycoproteins produced by B lymphocytes. In the recognition phase of humoral immunity, the membrane-bound immunoglobulins serve as receptors which, upon binding of a specific antigen, trigger the clonal expansion and differentiation of B lymphocytes into immunoglobulins-secreting plasma cells. Secreted immunoglobulins mediate the effector phase of humoral immunity, which results in the elimination of bound antigens (PubMed:20176268, PubMed:22158414). The antigen binding site is formed by the variable domain of one heavy chain, together with that of its associated light chain. Thus, each immunoglobulin has two antigen binding sites with remarkable affinity for a particular antigen. The variable domains are assembled by a process called V-(D)-J rearrangement and can then be subjected to somatic hypermutations which, after exposure to antigen and selection, allow affinity maturation for a particular antigen (PubMed:17576170, PubMed:20176268).</text>
</comment>
<comment type="subunit">
    <text evidence="6">Immunoglobulins are composed of two identical heavy chains and two identical light chains; disulfide-linked.</text>
</comment>
<comment type="subcellular location">
    <subcellularLocation>
        <location evidence="6 7">Secreted</location>
    </subcellularLocation>
    <subcellularLocation>
        <location evidence="6 7">Cell membrane</location>
    </subcellularLocation>
</comment>
<comment type="polymorphism">
    <text>There are several alleles. The sequence shown is that of IMGT allele IGLV5-37*01.</text>
</comment>
<comment type="caution">
    <text evidence="10">For an example of a full-length immunoglobulin lambda light chain see AC P0DOX8.</text>
</comment>
<dbReference type="EMBL" id="AC245291">
    <property type="status" value="NOT_ANNOTATED_CDS"/>
    <property type="molecule type" value="Genomic_DNA"/>
</dbReference>
<dbReference type="SMR" id="A0A075B6J1"/>
<dbReference type="FunCoup" id="A0A075B6J1">
    <property type="interactions" value="275"/>
</dbReference>
<dbReference type="IMGT_GENE-DB" id="IGLV5-37"/>
<dbReference type="BioMuta" id="IGLV5-37"/>
<dbReference type="MassIVE" id="A0A075B6J1"/>
<dbReference type="Ensembl" id="ENST00000390300.2">
    <property type="protein sequence ID" value="ENSP00000374835.2"/>
    <property type="gene ID" value="ENSG00000211654.2"/>
</dbReference>
<dbReference type="Ensembl" id="ENST00000628968.1">
    <property type="protein sequence ID" value="ENSP00000487591.1"/>
    <property type="gene ID" value="ENSG00000281471.1"/>
</dbReference>
<dbReference type="UCSC" id="uc062cbw.1">
    <property type="organism name" value="human"/>
</dbReference>
<dbReference type="AGR" id="HGNC:5922"/>
<dbReference type="GeneCards" id="IGLV5-37"/>
<dbReference type="HGNC" id="HGNC:5922">
    <property type="gene designation" value="IGLV5-37"/>
</dbReference>
<dbReference type="HPA" id="ENSG00000211654">
    <property type="expression patterns" value="Group enriched (gallbladder, intestine, lymphoid tissue, salivary gland, stomach)"/>
</dbReference>
<dbReference type="neXtProt" id="NX_A0A075B6J1"/>
<dbReference type="VEuPathDB" id="HostDB:ENSG00000211654"/>
<dbReference type="GeneTree" id="ENSGT00940000153520"/>
<dbReference type="HOGENOM" id="CLU_077975_4_0_1"/>
<dbReference type="InParanoid" id="A0A075B6J1"/>
<dbReference type="OMA" id="WHNSTSH"/>
<dbReference type="OrthoDB" id="8908372at2759"/>
<dbReference type="PAN-GO" id="A0A075B6J1">
    <property type="GO annotations" value="3 GO annotations based on evolutionary models"/>
</dbReference>
<dbReference type="PhylomeDB" id="A0A075B6J1"/>
<dbReference type="SignaLink" id="A0A075B6J1"/>
<dbReference type="Pharos" id="A0A075B6J1">
    <property type="development level" value="Tdark"/>
</dbReference>
<dbReference type="PRO" id="PR:A0A075B6J1"/>
<dbReference type="Proteomes" id="UP000005640">
    <property type="component" value="Chromosome 22"/>
</dbReference>
<dbReference type="RNAct" id="A0A075B6J1">
    <property type="molecule type" value="protein"/>
</dbReference>
<dbReference type="Bgee" id="ENSG00000211654">
    <property type="expression patterns" value="Expressed in rectum and 77 other cell types or tissues"/>
</dbReference>
<dbReference type="GO" id="GO:0005576">
    <property type="term" value="C:extracellular region"/>
    <property type="evidence" value="ECO:0007669"/>
    <property type="project" value="UniProtKB-SubCell"/>
</dbReference>
<dbReference type="GO" id="GO:0019814">
    <property type="term" value="C:immunoglobulin complex"/>
    <property type="evidence" value="ECO:0000318"/>
    <property type="project" value="GO_Central"/>
</dbReference>
<dbReference type="GO" id="GO:0005886">
    <property type="term" value="C:plasma membrane"/>
    <property type="evidence" value="ECO:0007669"/>
    <property type="project" value="UniProtKB-SubCell"/>
</dbReference>
<dbReference type="GO" id="GO:0002250">
    <property type="term" value="P:adaptive immune response"/>
    <property type="evidence" value="ECO:0007669"/>
    <property type="project" value="UniProtKB-KW"/>
</dbReference>
<dbReference type="GO" id="GO:0006955">
    <property type="term" value="P:immune response"/>
    <property type="evidence" value="ECO:0000318"/>
    <property type="project" value="GO_Central"/>
</dbReference>
<dbReference type="FunFam" id="2.60.40.10:FF:000721">
    <property type="entry name" value="Immunoglobulin lambda variable 5-45"/>
    <property type="match status" value="1"/>
</dbReference>
<dbReference type="Gene3D" id="2.60.40.10">
    <property type="entry name" value="Immunoglobulins"/>
    <property type="match status" value="1"/>
</dbReference>
<dbReference type="InterPro" id="IPR007110">
    <property type="entry name" value="Ig-like_dom"/>
</dbReference>
<dbReference type="InterPro" id="IPR036179">
    <property type="entry name" value="Ig-like_dom_sf"/>
</dbReference>
<dbReference type="InterPro" id="IPR013783">
    <property type="entry name" value="Ig-like_fold"/>
</dbReference>
<dbReference type="InterPro" id="IPR003599">
    <property type="entry name" value="Ig_sub"/>
</dbReference>
<dbReference type="InterPro" id="IPR013106">
    <property type="entry name" value="Ig_V-set"/>
</dbReference>
<dbReference type="InterPro" id="IPR050150">
    <property type="entry name" value="IgV_Light_Chain"/>
</dbReference>
<dbReference type="PANTHER" id="PTHR23267">
    <property type="entry name" value="IMMUNOGLOBULIN LIGHT CHAIN"/>
    <property type="match status" value="1"/>
</dbReference>
<dbReference type="Pfam" id="PF07686">
    <property type="entry name" value="V-set"/>
    <property type="match status" value="1"/>
</dbReference>
<dbReference type="SMART" id="SM00409">
    <property type="entry name" value="IG"/>
    <property type="match status" value="1"/>
</dbReference>
<dbReference type="SMART" id="SM00406">
    <property type="entry name" value="IGv"/>
    <property type="match status" value="1"/>
</dbReference>
<dbReference type="SUPFAM" id="SSF48726">
    <property type="entry name" value="Immunoglobulin"/>
    <property type="match status" value="1"/>
</dbReference>
<dbReference type="PROSITE" id="PS50835">
    <property type="entry name" value="IG_LIKE"/>
    <property type="match status" value="1"/>
</dbReference>
<gene>
    <name evidence="4 9" type="primary">IGLV5-37</name>
</gene>
<reference key="1">
    <citation type="journal article" date="1999" name="Nature">
        <title>The DNA sequence of human chromosome 22.</title>
        <authorList>
            <person name="Dunham I."/>
            <person name="Hunt A.R."/>
            <person name="Collins J.E."/>
            <person name="Bruskiewich R."/>
            <person name="Beare D.M."/>
            <person name="Clamp M."/>
            <person name="Smink L.J."/>
            <person name="Ainscough R."/>
            <person name="Almeida J.P."/>
            <person name="Babbage A.K."/>
            <person name="Bagguley C."/>
            <person name="Bailey J."/>
            <person name="Barlow K.F."/>
            <person name="Bates K.N."/>
            <person name="Beasley O.P."/>
            <person name="Bird C.P."/>
            <person name="Blakey S.E."/>
            <person name="Bridgeman A.M."/>
            <person name="Buck D."/>
            <person name="Burgess J."/>
            <person name="Burrill W.D."/>
            <person name="Burton J."/>
            <person name="Carder C."/>
            <person name="Carter N.P."/>
            <person name="Chen Y."/>
            <person name="Clark G."/>
            <person name="Clegg S.M."/>
            <person name="Cobley V.E."/>
            <person name="Cole C.G."/>
            <person name="Collier R.E."/>
            <person name="Connor R."/>
            <person name="Conroy D."/>
            <person name="Corby N.R."/>
            <person name="Coville G.J."/>
            <person name="Cox A.V."/>
            <person name="Davis J."/>
            <person name="Dawson E."/>
            <person name="Dhami P.D."/>
            <person name="Dockree C."/>
            <person name="Dodsworth S.J."/>
            <person name="Durbin R.M."/>
            <person name="Ellington A.G."/>
            <person name="Evans K.L."/>
            <person name="Fey J.M."/>
            <person name="Fleming K."/>
            <person name="French L."/>
            <person name="Garner A.A."/>
            <person name="Gilbert J.G.R."/>
            <person name="Goward M.E."/>
            <person name="Grafham D.V."/>
            <person name="Griffiths M.N.D."/>
            <person name="Hall C."/>
            <person name="Hall R.E."/>
            <person name="Hall-Tamlyn G."/>
            <person name="Heathcott R.W."/>
            <person name="Ho S."/>
            <person name="Holmes S."/>
            <person name="Hunt S.E."/>
            <person name="Jones M.C."/>
            <person name="Kershaw J."/>
            <person name="Kimberley A.M."/>
            <person name="King A."/>
            <person name="Laird G.K."/>
            <person name="Langford C.F."/>
            <person name="Leversha M.A."/>
            <person name="Lloyd C."/>
            <person name="Lloyd D.M."/>
            <person name="Martyn I.D."/>
            <person name="Mashreghi-Mohammadi M."/>
            <person name="Matthews L.H."/>
            <person name="Mccann O.T."/>
            <person name="Mcclay J."/>
            <person name="Mclaren S."/>
            <person name="McMurray A.A."/>
            <person name="Milne S.A."/>
            <person name="Mortimore B.J."/>
            <person name="Odell C.N."/>
            <person name="Pavitt R."/>
            <person name="Pearce A.V."/>
            <person name="Pearson D."/>
            <person name="Phillimore B.J.C.T."/>
            <person name="Phillips S.H."/>
            <person name="Plumb R.W."/>
            <person name="Ramsay H."/>
            <person name="Ramsey Y."/>
            <person name="Rogers L."/>
            <person name="Ross M.T."/>
            <person name="Scott C.E."/>
            <person name="Sehra H.K."/>
            <person name="Skuce C.D."/>
            <person name="Smalley S."/>
            <person name="Smith M.L."/>
            <person name="Soderlund C."/>
            <person name="Spragon L."/>
            <person name="Steward C.A."/>
            <person name="Sulston J.E."/>
            <person name="Swann R.M."/>
            <person name="Vaudin M."/>
            <person name="Wall M."/>
            <person name="Wallis J.M."/>
            <person name="Whiteley M.N."/>
            <person name="Willey D.L."/>
            <person name="Williams L."/>
            <person name="Williams S.A."/>
            <person name="Williamson H."/>
            <person name="Wilmer T.E."/>
            <person name="Wilming L."/>
            <person name="Wright C.L."/>
            <person name="Hubbard T."/>
            <person name="Bentley D.R."/>
            <person name="Beck S."/>
            <person name="Rogers J."/>
            <person name="Shimizu N."/>
            <person name="Minoshima S."/>
            <person name="Kawasaki K."/>
            <person name="Sasaki T."/>
            <person name="Asakawa S."/>
            <person name="Kudoh J."/>
            <person name="Shintani A."/>
            <person name="Shibuya K."/>
            <person name="Yoshizaki Y."/>
            <person name="Aoki N."/>
            <person name="Mitsuyama S."/>
            <person name="Roe B.A."/>
            <person name="Chen F."/>
            <person name="Chu L."/>
            <person name="Crabtree J."/>
            <person name="Deschamps S."/>
            <person name="Do A."/>
            <person name="Do T."/>
            <person name="Dorman A."/>
            <person name="Fang F."/>
            <person name="Fu Y."/>
            <person name="Hu P."/>
            <person name="Hua A."/>
            <person name="Kenton S."/>
            <person name="Lai H."/>
            <person name="Lao H.I."/>
            <person name="Lewis J."/>
            <person name="Lewis S."/>
            <person name="Lin S.-P."/>
            <person name="Loh P."/>
            <person name="Malaj E."/>
            <person name="Nguyen T."/>
            <person name="Pan H."/>
            <person name="Phan S."/>
            <person name="Qi S."/>
            <person name="Qian Y."/>
            <person name="Ray L."/>
            <person name="Ren Q."/>
            <person name="Shaull S."/>
            <person name="Sloan D."/>
            <person name="Song L."/>
            <person name="Wang Q."/>
            <person name="Wang Y."/>
            <person name="Wang Z."/>
            <person name="White J."/>
            <person name="Willingham D."/>
            <person name="Wu H."/>
            <person name="Yao Z."/>
            <person name="Zhan M."/>
            <person name="Zhang G."/>
            <person name="Chissoe S."/>
            <person name="Murray J."/>
            <person name="Miller N."/>
            <person name="Minx P."/>
            <person name="Fulton R."/>
            <person name="Johnson D."/>
            <person name="Bemis G."/>
            <person name="Bentley D."/>
            <person name="Bradshaw H."/>
            <person name="Bourne S."/>
            <person name="Cordes M."/>
            <person name="Du Z."/>
            <person name="Fulton L."/>
            <person name="Goela D."/>
            <person name="Graves T."/>
            <person name="Hawkins J."/>
            <person name="Hinds K."/>
            <person name="Kemp K."/>
            <person name="Latreille P."/>
            <person name="Layman D."/>
            <person name="Ozersky P."/>
            <person name="Rohlfing T."/>
            <person name="Scheet P."/>
            <person name="Walker C."/>
            <person name="Wamsley A."/>
            <person name="Wohldmann P."/>
            <person name="Pepin K."/>
            <person name="Nelson J."/>
            <person name="Korf I."/>
            <person name="Bedell J.A."/>
            <person name="Hillier L.W."/>
            <person name="Mardis E."/>
            <person name="Waterston R."/>
            <person name="Wilson R."/>
            <person name="Emanuel B.S."/>
            <person name="Shaikh T."/>
            <person name="Kurahashi H."/>
            <person name="Saitta S."/>
            <person name="Budarf M.L."/>
            <person name="McDermid H.E."/>
            <person name="Johnson A."/>
            <person name="Wong A.C.C."/>
            <person name="Morrow B.E."/>
            <person name="Edelmann L."/>
            <person name="Kim U.J."/>
            <person name="Shizuya H."/>
            <person name="Simon M.I."/>
            <person name="Dumanski J.P."/>
            <person name="Peyrard M."/>
            <person name="Kedra D."/>
            <person name="Seroussi E."/>
            <person name="Fransson I."/>
            <person name="Tapia I."/>
            <person name="Bruder C.E."/>
            <person name="O'Brien K.P."/>
            <person name="Wilkinson P."/>
            <person name="Bodenteich A."/>
            <person name="Hartman K."/>
            <person name="Hu X."/>
            <person name="Khan A.S."/>
            <person name="Lane L."/>
            <person name="Tilahun Y."/>
            <person name="Wright H."/>
        </authorList>
    </citation>
    <scope>NUCLEOTIDE SEQUENCE [LARGE SCALE GENOMIC DNA] (IMGT ALLELE IGLV5-37*01)</scope>
</reference>
<reference key="2">
    <citation type="journal article" date="2001" name="Exp. Clin. Immunogenet.">
        <title>Nomenclature of the human immunoglobulin lambda (IGL) genes.</title>
        <authorList>
            <person name="Lefranc M.P."/>
        </authorList>
    </citation>
    <scope>NOMENCLATURE</scope>
</reference>
<reference key="3">
    <citation type="book" date="2001" name="The Immunoglobulin FactsBook.">
        <title>The Immunoglobulin FactsBook.</title>
        <editorList>
            <person name="Lefranc M.P."/>
            <person name="Lefranc G."/>
        </editorList>
        <authorList>
            <person name="Lefranc M.P."/>
            <person name="Lefranc G."/>
        </authorList>
    </citation>
    <scope>NOMENCLATURE</scope>
</reference>
<reference key="4">
    <citation type="journal article" date="2007" name="Annu. Rev. Genet.">
        <title>Immunoglobulin somatic hypermutation.</title>
        <authorList>
            <person name="Teng G."/>
            <person name="Papavasiliou F.N."/>
        </authorList>
    </citation>
    <scope>REVIEW ON SOMATIC HYPERMUTATION</scope>
</reference>
<reference key="5">
    <citation type="journal article" date="2010" name="J. Allergy Clin. Immunol.">
        <title>Structure and function of immunoglobulins.</title>
        <authorList>
            <person name="Schroeder H.W. Jr."/>
            <person name="Cavacini L."/>
        </authorList>
    </citation>
    <scope>REVIEW ON IMMUNOGLOBULINS</scope>
</reference>
<reference key="6">
    <citation type="journal article" date="2012" name="Nat. Rev. Immunol.">
        <title>Molecular programming of B cell memory.</title>
        <authorList>
            <person name="McHeyzer-Williams M."/>
            <person name="Okitsu S."/>
            <person name="Wang N."/>
            <person name="McHeyzer-Williams L."/>
        </authorList>
    </citation>
    <scope>REVIEW ON FUNCTION</scope>
</reference>
<reference key="7">
    <citation type="journal article" date="2014" name="Front. Immunol.">
        <title>Immunoglobulin and T Cell Receptor Genes: IMGT((R)) and the Birth and Rise of Immunoinformatics.</title>
        <authorList>
            <person name="Lefranc M.P."/>
        </authorList>
    </citation>
    <scope>NOMENCLATURE</scope>
</reference>
<protein>
    <recommendedName>
        <fullName evidence="4 9">Immunoglobulin lambda variable 5-37</fullName>
    </recommendedName>
</protein>
<feature type="signal peptide" evidence="2">
    <location>
        <begin position="1"/>
        <end position="19"/>
    </location>
</feature>
<feature type="chain" id="PRO_5007375745" description="Immunoglobulin lambda variable 5-37" evidence="2">
    <location>
        <begin position="20"/>
        <end position="123"/>
    </location>
</feature>
<feature type="domain" description="Ig-like" evidence="3">
    <location>
        <begin position="21"/>
        <end position="123" status="greater than"/>
    </location>
</feature>
<feature type="region of interest" description="Framework-1" evidence="1">
    <location>
        <begin position="20"/>
        <end position="44"/>
    </location>
</feature>
<feature type="region of interest" description="Complementarity-determining-1" evidence="1">
    <location>
        <begin position="45"/>
        <end position="53"/>
    </location>
</feature>
<feature type="region of interest" description="Framework-2" evidence="1">
    <location>
        <begin position="54"/>
        <end position="70"/>
    </location>
</feature>
<feature type="region of interest" description="Complementarity-determining-2" evidence="1">
    <location>
        <begin position="71"/>
        <end position="77"/>
    </location>
</feature>
<feature type="region of interest" description="Framework-3" evidence="1">
    <location>
        <begin position="78"/>
        <end position="115"/>
    </location>
</feature>
<feature type="region of interest" description="Complementarity-determining-3" evidence="1">
    <location>
        <begin position="116"/>
        <end position="123" status="greater than"/>
    </location>
</feature>
<feature type="disulfide bond" evidence="3">
    <location>
        <begin position="41"/>
        <end position="115"/>
    </location>
</feature>
<feature type="non-terminal residue">
    <location>
        <position position="123"/>
    </location>
</feature>
<sequence>MAWTPLLLLLLSHCTGSLSQPVLTQPPSSSASPGESARLTCTLPSDINVGSYNIYWYQQKPGSPPRYLLYYYSDSDKGQGSGVPSRFSGSKDASANTGILLISGLQSEDEADYYCMIWPSNAS</sequence>
<organism>
    <name type="scientific">Homo sapiens</name>
    <name type="common">Human</name>
    <dbReference type="NCBI Taxonomy" id="9606"/>
    <lineage>
        <taxon>Eukaryota</taxon>
        <taxon>Metazoa</taxon>
        <taxon>Chordata</taxon>
        <taxon>Craniata</taxon>
        <taxon>Vertebrata</taxon>
        <taxon>Euteleostomi</taxon>
        <taxon>Mammalia</taxon>
        <taxon>Eutheria</taxon>
        <taxon>Euarchontoglires</taxon>
        <taxon>Primates</taxon>
        <taxon>Haplorrhini</taxon>
        <taxon>Catarrhini</taxon>
        <taxon>Hominidae</taxon>
        <taxon>Homo</taxon>
    </lineage>
</organism>
<name>LV537_HUMAN</name>